<protein>
    <recommendedName>
        <fullName evidence="1">Large ribosomal subunit protein uL5</fullName>
    </recommendedName>
    <alternativeName>
        <fullName evidence="2">50S ribosomal protein L5</fullName>
    </alternativeName>
</protein>
<keyword id="KW-0687">Ribonucleoprotein</keyword>
<keyword id="KW-0689">Ribosomal protein</keyword>
<keyword id="KW-0694">RNA-binding</keyword>
<keyword id="KW-0699">rRNA-binding</keyword>
<keyword id="KW-0820">tRNA-binding</keyword>
<evidence type="ECO:0000255" key="1">
    <source>
        <dbReference type="HAMAP-Rule" id="MF_01333"/>
    </source>
</evidence>
<evidence type="ECO:0000305" key="2"/>
<comment type="function">
    <text evidence="1">This is one of the proteins that bind and probably mediate the attachment of the 5S RNA into the large ribosomal subunit, where it forms part of the central protuberance. In the 70S ribosome it contacts protein S13 of the 30S subunit (bridge B1b), connecting the 2 subunits; this bridge is implicated in subunit movement. Contacts the P site tRNA; the 5S rRNA and some of its associated proteins might help stabilize positioning of ribosome-bound tRNAs.</text>
</comment>
<comment type="subunit">
    <text evidence="1">Part of the 50S ribosomal subunit; part of the 5S rRNA/L5/L18/L25 subcomplex. Contacts the 5S rRNA and the P site tRNA. Forms a bridge to the 30S subunit in the 70S ribosome.</text>
</comment>
<comment type="similarity">
    <text evidence="1">Belongs to the universal ribosomal protein uL5 family.</text>
</comment>
<reference key="1">
    <citation type="journal article" date="2007" name="Genes Dev.">
        <title>New insights into Acinetobacter baumannii pathogenesis revealed by high-density pyrosequencing and transposon mutagenesis.</title>
        <authorList>
            <person name="Smith M.G."/>
            <person name="Gianoulis T.A."/>
            <person name="Pukatzki S."/>
            <person name="Mekalanos J.J."/>
            <person name="Ornston L.N."/>
            <person name="Gerstein M."/>
            <person name="Snyder M."/>
        </authorList>
    </citation>
    <scope>NUCLEOTIDE SEQUENCE [LARGE SCALE GENOMIC DNA]</scope>
    <source>
        <strain>ATCC 17978 / DSM 105126 / CIP 53.77 / LMG 1025 / NCDC KC755 / 5377</strain>
    </source>
</reference>
<sequence>MARLKARYNDELKAKLQEELSIKNVMEIPRITKITLNMGVGAAATDKKLLDGAVADMQLIAGQKPVVTLARKSIAGFKIRDGWPIGCKVTLRGDQMYEFLDRLISIAIPRIRDFRGFSAKSFDGRGNYSMGLKEQIVFPEIDFDKIDRIRGMDITITTTARTDDEGRALMRAFGFPFK</sequence>
<name>RL5_ACIBT</name>
<dbReference type="EMBL" id="CP000521">
    <property type="protein sequence ID" value="ABO13466.2"/>
    <property type="molecule type" value="Genomic_DNA"/>
</dbReference>
<dbReference type="RefSeq" id="WP_000113197.1">
    <property type="nucleotide sequence ID" value="NZ_CP053098.1"/>
</dbReference>
<dbReference type="SMR" id="A3M972"/>
<dbReference type="GeneID" id="92895305"/>
<dbReference type="KEGG" id="acb:A1S_3069"/>
<dbReference type="HOGENOM" id="CLU_061015_2_1_6"/>
<dbReference type="GO" id="GO:1990904">
    <property type="term" value="C:ribonucleoprotein complex"/>
    <property type="evidence" value="ECO:0007669"/>
    <property type="project" value="UniProtKB-KW"/>
</dbReference>
<dbReference type="GO" id="GO:0005840">
    <property type="term" value="C:ribosome"/>
    <property type="evidence" value="ECO:0007669"/>
    <property type="project" value="UniProtKB-KW"/>
</dbReference>
<dbReference type="GO" id="GO:0019843">
    <property type="term" value="F:rRNA binding"/>
    <property type="evidence" value="ECO:0007669"/>
    <property type="project" value="UniProtKB-UniRule"/>
</dbReference>
<dbReference type="GO" id="GO:0003735">
    <property type="term" value="F:structural constituent of ribosome"/>
    <property type="evidence" value="ECO:0007669"/>
    <property type="project" value="InterPro"/>
</dbReference>
<dbReference type="GO" id="GO:0000049">
    <property type="term" value="F:tRNA binding"/>
    <property type="evidence" value="ECO:0007669"/>
    <property type="project" value="UniProtKB-UniRule"/>
</dbReference>
<dbReference type="GO" id="GO:0006412">
    <property type="term" value="P:translation"/>
    <property type="evidence" value="ECO:0007669"/>
    <property type="project" value="UniProtKB-UniRule"/>
</dbReference>
<dbReference type="FunFam" id="3.30.1440.10:FF:000001">
    <property type="entry name" value="50S ribosomal protein L5"/>
    <property type="match status" value="1"/>
</dbReference>
<dbReference type="Gene3D" id="3.30.1440.10">
    <property type="match status" value="1"/>
</dbReference>
<dbReference type="HAMAP" id="MF_01333_B">
    <property type="entry name" value="Ribosomal_uL5_B"/>
    <property type="match status" value="1"/>
</dbReference>
<dbReference type="InterPro" id="IPR002132">
    <property type="entry name" value="Ribosomal_uL5"/>
</dbReference>
<dbReference type="InterPro" id="IPR020930">
    <property type="entry name" value="Ribosomal_uL5_bac-type"/>
</dbReference>
<dbReference type="InterPro" id="IPR031309">
    <property type="entry name" value="Ribosomal_uL5_C"/>
</dbReference>
<dbReference type="InterPro" id="IPR020929">
    <property type="entry name" value="Ribosomal_uL5_CS"/>
</dbReference>
<dbReference type="InterPro" id="IPR022803">
    <property type="entry name" value="Ribosomal_uL5_dom_sf"/>
</dbReference>
<dbReference type="InterPro" id="IPR031310">
    <property type="entry name" value="Ribosomal_uL5_N"/>
</dbReference>
<dbReference type="NCBIfam" id="NF000585">
    <property type="entry name" value="PRK00010.1"/>
    <property type="match status" value="1"/>
</dbReference>
<dbReference type="PANTHER" id="PTHR11994">
    <property type="entry name" value="60S RIBOSOMAL PROTEIN L11-RELATED"/>
    <property type="match status" value="1"/>
</dbReference>
<dbReference type="Pfam" id="PF00281">
    <property type="entry name" value="Ribosomal_L5"/>
    <property type="match status" value="1"/>
</dbReference>
<dbReference type="Pfam" id="PF00673">
    <property type="entry name" value="Ribosomal_L5_C"/>
    <property type="match status" value="1"/>
</dbReference>
<dbReference type="PIRSF" id="PIRSF002161">
    <property type="entry name" value="Ribosomal_L5"/>
    <property type="match status" value="1"/>
</dbReference>
<dbReference type="SUPFAM" id="SSF55282">
    <property type="entry name" value="RL5-like"/>
    <property type="match status" value="1"/>
</dbReference>
<dbReference type="PROSITE" id="PS00358">
    <property type="entry name" value="RIBOSOMAL_L5"/>
    <property type="match status" value="1"/>
</dbReference>
<accession>A3M972</accession>
<gene>
    <name evidence="1" type="primary">rplE</name>
    <name type="ordered locus">A1S_3069</name>
</gene>
<organism>
    <name type="scientific">Acinetobacter baumannii (strain ATCC 17978 / DSM 105126 / CIP 53.77 / LMG 1025 / NCDC KC755 / 5377)</name>
    <dbReference type="NCBI Taxonomy" id="400667"/>
    <lineage>
        <taxon>Bacteria</taxon>
        <taxon>Pseudomonadati</taxon>
        <taxon>Pseudomonadota</taxon>
        <taxon>Gammaproteobacteria</taxon>
        <taxon>Moraxellales</taxon>
        <taxon>Moraxellaceae</taxon>
        <taxon>Acinetobacter</taxon>
        <taxon>Acinetobacter calcoaceticus/baumannii complex</taxon>
    </lineage>
</organism>
<feature type="chain" id="PRO_1000142343" description="Large ribosomal subunit protein uL5">
    <location>
        <begin position="1"/>
        <end position="178"/>
    </location>
</feature>
<proteinExistence type="inferred from homology"/>